<sequence length="188" mass="21272">MSIKSDKWIRRMAEQHGMIEPFAPGQVREQDGRKIVSYGTSSYGYDIRCADEFKIFTNINSTIVDPKNFDEKSFVDFKGDVCIIPPNSFALARTMEYFRIPRSVLTICLGKSTYARCGIIVNVTPFEPEWEGYVTLEFSNTTPLPAKIYAGEGCAQVLFFESDEVCETSYRDRGGKYQGQHGVTLPKT</sequence>
<proteinExistence type="inferred from homology"/>
<protein>
    <recommendedName>
        <fullName evidence="1">dCTP deaminase</fullName>
        <ecNumber evidence="1">3.5.4.13</ecNumber>
    </recommendedName>
    <alternativeName>
        <fullName evidence="1">Deoxycytidine triphosphate deaminase</fullName>
    </alternativeName>
</protein>
<name>DCD_CUPNH</name>
<organism>
    <name type="scientific">Cupriavidus necator (strain ATCC 17699 / DSM 428 / KCTC 22496 / NCIMB 10442 / H16 / Stanier 337)</name>
    <name type="common">Ralstonia eutropha</name>
    <dbReference type="NCBI Taxonomy" id="381666"/>
    <lineage>
        <taxon>Bacteria</taxon>
        <taxon>Pseudomonadati</taxon>
        <taxon>Pseudomonadota</taxon>
        <taxon>Betaproteobacteria</taxon>
        <taxon>Burkholderiales</taxon>
        <taxon>Burkholderiaceae</taxon>
        <taxon>Cupriavidus</taxon>
    </lineage>
</organism>
<gene>
    <name evidence="1" type="primary">dcd</name>
    <name type="ordered locus">H16_A2931</name>
</gene>
<keyword id="KW-0378">Hydrolase</keyword>
<keyword id="KW-0546">Nucleotide metabolism</keyword>
<keyword id="KW-0547">Nucleotide-binding</keyword>
<keyword id="KW-1185">Reference proteome</keyword>
<feature type="chain" id="PRO_1000009793" description="dCTP deaminase">
    <location>
        <begin position="1"/>
        <end position="188"/>
    </location>
</feature>
<feature type="active site" description="Proton donor/acceptor" evidence="1">
    <location>
        <position position="137"/>
    </location>
</feature>
<feature type="binding site" evidence="1">
    <location>
        <begin position="111"/>
        <end position="116"/>
    </location>
    <ligand>
        <name>dCTP</name>
        <dbReference type="ChEBI" id="CHEBI:61481"/>
    </ligand>
</feature>
<feature type="binding site" evidence="1">
    <location>
        <begin position="135"/>
        <end position="137"/>
    </location>
    <ligand>
        <name>dCTP</name>
        <dbReference type="ChEBI" id="CHEBI:61481"/>
    </ligand>
</feature>
<feature type="binding site" evidence="1">
    <location>
        <position position="156"/>
    </location>
    <ligand>
        <name>dCTP</name>
        <dbReference type="ChEBI" id="CHEBI:61481"/>
    </ligand>
</feature>
<feature type="binding site" evidence="1">
    <location>
        <position position="170"/>
    </location>
    <ligand>
        <name>dCTP</name>
        <dbReference type="ChEBI" id="CHEBI:61481"/>
    </ligand>
</feature>
<feature type="binding site" evidence="1">
    <location>
        <position position="180"/>
    </location>
    <ligand>
        <name>dCTP</name>
        <dbReference type="ChEBI" id="CHEBI:61481"/>
    </ligand>
</feature>
<comment type="function">
    <text evidence="1">Catalyzes the deamination of dCTP to dUTP.</text>
</comment>
<comment type="catalytic activity">
    <reaction evidence="1">
        <text>dCTP + H2O + H(+) = dUTP + NH4(+)</text>
        <dbReference type="Rhea" id="RHEA:22680"/>
        <dbReference type="ChEBI" id="CHEBI:15377"/>
        <dbReference type="ChEBI" id="CHEBI:15378"/>
        <dbReference type="ChEBI" id="CHEBI:28938"/>
        <dbReference type="ChEBI" id="CHEBI:61481"/>
        <dbReference type="ChEBI" id="CHEBI:61555"/>
        <dbReference type="EC" id="3.5.4.13"/>
    </reaction>
</comment>
<comment type="pathway">
    <text evidence="1">Pyrimidine metabolism; dUMP biosynthesis; dUMP from dCTP (dUTP route): step 1/2.</text>
</comment>
<comment type="subunit">
    <text evidence="1">Homotrimer.</text>
</comment>
<comment type="similarity">
    <text evidence="1">Belongs to the dCTP deaminase family.</text>
</comment>
<reference key="1">
    <citation type="journal article" date="2006" name="Nat. Biotechnol.">
        <title>Genome sequence of the bioplastic-producing 'Knallgas' bacterium Ralstonia eutropha H16.</title>
        <authorList>
            <person name="Pohlmann A."/>
            <person name="Fricke W.F."/>
            <person name="Reinecke F."/>
            <person name="Kusian B."/>
            <person name="Liesegang H."/>
            <person name="Cramm R."/>
            <person name="Eitinger T."/>
            <person name="Ewering C."/>
            <person name="Poetter M."/>
            <person name="Schwartz E."/>
            <person name="Strittmatter A."/>
            <person name="Voss I."/>
            <person name="Gottschalk G."/>
            <person name="Steinbuechel A."/>
            <person name="Friedrich B."/>
            <person name="Bowien B."/>
        </authorList>
    </citation>
    <scope>NUCLEOTIDE SEQUENCE [LARGE SCALE GENOMIC DNA]</scope>
    <source>
        <strain>ATCC 17699 / DSM 428 / KCTC 22496 / NCIMB 10442 / H16 / Stanier 337</strain>
    </source>
</reference>
<evidence type="ECO:0000255" key="1">
    <source>
        <dbReference type="HAMAP-Rule" id="MF_00146"/>
    </source>
</evidence>
<dbReference type="EC" id="3.5.4.13" evidence="1"/>
<dbReference type="EMBL" id="AM260479">
    <property type="protein sequence ID" value="CAJ94007.1"/>
    <property type="molecule type" value="Genomic_DNA"/>
</dbReference>
<dbReference type="RefSeq" id="WP_010813843.1">
    <property type="nucleotide sequence ID" value="NZ_CP039287.1"/>
</dbReference>
<dbReference type="SMR" id="Q0K7L4"/>
<dbReference type="STRING" id="381666.H16_A2931"/>
<dbReference type="GeneID" id="34308791"/>
<dbReference type="KEGG" id="reh:H16_A2931"/>
<dbReference type="eggNOG" id="COG0717">
    <property type="taxonomic scope" value="Bacteria"/>
</dbReference>
<dbReference type="HOGENOM" id="CLU_087476_4_0_4"/>
<dbReference type="OrthoDB" id="9780956at2"/>
<dbReference type="UniPathway" id="UPA00610">
    <property type="reaction ID" value="UER00665"/>
</dbReference>
<dbReference type="Proteomes" id="UP000008210">
    <property type="component" value="Chromosome 1"/>
</dbReference>
<dbReference type="GO" id="GO:0008829">
    <property type="term" value="F:dCTP deaminase activity"/>
    <property type="evidence" value="ECO:0007669"/>
    <property type="project" value="UniProtKB-UniRule"/>
</dbReference>
<dbReference type="GO" id="GO:0000166">
    <property type="term" value="F:nucleotide binding"/>
    <property type="evidence" value="ECO:0007669"/>
    <property type="project" value="UniProtKB-KW"/>
</dbReference>
<dbReference type="GO" id="GO:0006226">
    <property type="term" value="P:dUMP biosynthetic process"/>
    <property type="evidence" value="ECO:0007669"/>
    <property type="project" value="UniProtKB-UniPathway"/>
</dbReference>
<dbReference type="GO" id="GO:0006229">
    <property type="term" value="P:dUTP biosynthetic process"/>
    <property type="evidence" value="ECO:0007669"/>
    <property type="project" value="UniProtKB-UniRule"/>
</dbReference>
<dbReference type="GO" id="GO:0015949">
    <property type="term" value="P:nucleobase-containing small molecule interconversion"/>
    <property type="evidence" value="ECO:0007669"/>
    <property type="project" value="TreeGrafter"/>
</dbReference>
<dbReference type="CDD" id="cd07557">
    <property type="entry name" value="trimeric_dUTPase"/>
    <property type="match status" value="1"/>
</dbReference>
<dbReference type="FunFam" id="2.70.40.10:FF:000001">
    <property type="entry name" value="dCTP deaminase"/>
    <property type="match status" value="1"/>
</dbReference>
<dbReference type="Gene3D" id="2.70.40.10">
    <property type="match status" value="1"/>
</dbReference>
<dbReference type="HAMAP" id="MF_00146">
    <property type="entry name" value="dCTP_deaminase"/>
    <property type="match status" value="1"/>
</dbReference>
<dbReference type="InterPro" id="IPR011962">
    <property type="entry name" value="dCTP_deaminase"/>
</dbReference>
<dbReference type="InterPro" id="IPR036157">
    <property type="entry name" value="dUTPase-like_sf"/>
</dbReference>
<dbReference type="InterPro" id="IPR033704">
    <property type="entry name" value="dUTPase_trimeric"/>
</dbReference>
<dbReference type="NCBIfam" id="TIGR02274">
    <property type="entry name" value="dCTP_deam"/>
    <property type="match status" value="1"/>
</dbReference>
<dbReference type="PANTHER" id="PTHR42680">
    <property type="entry name" value="DCTP DEAMINASE"/>
    <property type="match status" value="1"/>
</dbReference>
<dbReference type="PANTHER" id="PTHR42680:SF3">
    <property type="entry name" value="DCTP DEAMINASE"/>
    <property type="match status" value="1"/>
</dbReference>
<dbReference type="Pfam" id="PF22769">
    <property type="entry name" value="DCD"/>
    <property type="match status" value="1"/>
</dbReference>
<dbReference type="SUPFAM" id="SSF51283">
    <property type="entry name" value="dUTPase-like"/>
    <property type="match status" value="1"/>
</dbReference>
<accession>Q0K7L4</accession>